<feature type="chain" id="PRO_0000077538" description="Divinyl chlorophyll a/b light-harvesting protein PcbA">
    <location>
        <begin position="1"/>
        <end position="351"/>
    </location>
</feature>
<feature type="transmembrane region" description="Helical" evidence="2">
    <location>
        <begin position="27"/>
        <end position="47"/>
    </location>
</feature>
<feature type="transmembrane region" description="Helical" evidence="2">
    <location>
        <begin position="64"/>
        <end position="84"/>
    </location>
</feature>
<feature type="transmembrane region" description="Helical" evidence="2">
    <location>
        <begin position="89"/>
        <end position="109"/>
    </location>
</feature>
<feature type="transmembrane region" description="Helical" evidence="2">
    <location>
        <begin position="202"/>
        <end position="222"/>
    </location>
</feature>
<feature type="transmembrane region" description="Helical" evidence="2">
    <location>
        <begin position="242"/>
        <end position="262"/>
    </location>
</feature>
<feature type="transmembrane region" description="Helical" evidence="2">
    <location>
        <begin position="305"/>
        <end position="325"/>
    </location>
</feature>
<feature type="sequence conflict" description="In Ref. 1; AAC45352." evidence="9" ref="1">
    <original>NRS</original>
    <variation>HPP</variation>
    <location>
        <begin position="22"/>
        <end position="24"/>
    </location>
</feature>
<feature type="sequence conflict" description="In Ref. 1; AAC45352." evidence="9" ref="1">
    <original>IAFW</original>
    <variation>DCFL</variation>
    <location>
        <begin position="38"/>
        <end position="41"/>
    </location>
</feature>
<feature type="sequence conflict" description="In Ref. 1; AAC45352." evidence="9" ref="1">
    <original>H</original>
    <variation>D</variation>
    <location>
        <position position="164"/>
    </location>
</feature>
<gene>
    <name type="primary">pcbA</name>
    <name type="ordered locus">Pro_0783</name>
</gene>
<comment type="function">
    <text evidence="7 8">The antenna complex functions as a light receptor, it captures and delivers excitation energy to photosystems II and I. The Prochlorales pcb genes are not related to higher plant LHCs.</text>
</comment>
<comment type="cofactor">
    <cofactor evidence="8">
        <name>divinyl chlorophyll a</name>
        <dbReference type="ChEBI" id="CHEBI:73095"/>
    </cofactor>
</comment>
<comment type="cofactor">
    <cofactor evidence="8">
        <name>divinyl chlorophyll b</name>
        <dbReference type="ChEBI" id="CHEBI:73096"/>
    </cofactor>
</comment>
<comment type="subunit">
    <text evidence="5">The antenna complex consists of divinyl chlorophylls (a and b) and divinyl chlorophyll a/b binding proteins and binds more divinyl chlorophyll b than does the antenna complex from high-light-adapted Prochlorococcus.</text>
</comment>
<comment type="subcellular location">
    <subcellularLocation>
        <location evidence="5">Cellular thylakoid membrane</location>
        <topology evidence="1">Multi-pass membrane protein</topology>
    </subcellularLocation>
</comment>
<comment type="induction">
    <text evidence="3 4">This transcript is moderately expressed between 4.5 and 72 umol blue light/m2/s. The whole antenna complex is most highly expressed under low light; as the light levels increase antenna complex levels decrease. Thus at least in this strain the amount of antenna complex is controlled mostly at a post-transcriptional level. Transcription decreases upon iron starvation.</text>
</comment>
<comment type="miscellaneous">
    <text evidence="6">This low-light-adapted strain contains 8 pcb genes.</text>
</comment>
<comment type="similarity">
    <text evidence="9">Belongs to the PsbB/PsbC family. IsiA/Pcb subfamily.</text>
</comment>
<name>PCBA_PROMA</name>
<accession>Q7VCF7</accession>
<accession>O07306</accession>
<proteinExistence type="evidence at protein level"/>
<evidence type="ECO:0000250" key="1"/>
<evidence type="ECO:0000255" key="2"/>
<evidence type="ECO:0000269" key="3">
    <source>
    </source>
</evidence>
<evidence type="ECO:0000269" key="4">
    <source>
    </source>
</evidence>
<evidence type="ECO:0000269" key="5">
    <source ref="3"/>
</evidence>
<evidence type="ECO:0000303" key="6">
    <source>
    </source>
</evidence>
<evidence type="ECO:0000303" key="7">
    <source>
    </source>
</evidence>
<evidence type="ECO:0000303" key="8">
    <source ref="3"/>
</evidence>
<evidence type="ECO:0000305" key="9"/>
<dbReference type="EMBL" id="U57661">
    <property type="protein sequence ID" value="AAC45352.1"/>
    <property type="molecule type" value="Genomic_DNA"/>
</dbReference>
<dbReference type="EMBL" id="AE017126">
    <property type="protein sequence ID" value="AAP99827.1"/>
    <property type="molecule type" value="Genomic_DNA"/>
</dbReference>
<dbReference type="RefSeq" id="NP_875175.1">
    <property type="nucleotide sequence ID" value="NC_005042.1"/>
</dbReference>
<dbReference type="RefSeq" id="WP_011124935.1">
    <property type="nucleotide sequence ID" value="NC_005042.1"/>
</dbReference>
<dbReference type="SMR" id="Q7VCF7"/>
<dbReference type="STRING" id="167539.Pro_0783"/>
<dbReference type="EnsemblBacteria" id="AAP99827">
    <property type="protein sequence ID" value="AAP99827"/>
    <property type="gene ID" value="Pro_0783"/>
</dbReference>
<dbReference type="KEGG" id="pma:Pro_0783"/>
<dbReference type="PATRIC" id="fig|167539.5.peg.830"/>
<dbReference type="eggNOG" id="ENOG5033QV9">
    <property type="taxonomic scope" value="Bacteria"/>
</dbReference>
<dbReference type="HOGENOM" id="CLU_028310_0_0_3"/>
<dbReference type="OrthoDB" id="9429529at2"/>
<dbReference type="Proteomes" id="UP000001420">
    <property type="component" value="Chromosome"/>
</dbReference>
<dbReference type="GO" id="GO:0009522">
    <property type="term" value="C:photosystem I"/>
    <property type="evidence" value="ECO:0007669"/>
    <property type="project" value="UniProtKB-KW"/>
</dbReference>
<dbReference type="GO" id="GO:0009523">
    <property type="term" value="C:photosystem II"/>
    <property type="evidence" value="ECO:0007669"/>
    <property type="project" value="UniProtKB-KW"/>
</dbReference>
<dbReference type="GO" id="GO:0031676">
    <property type="term" value="C:plasma membrane-derived thylakoid membrane"/>
    <property type="evidence" value="ECO:0007669"/>
    <property type="project" value="UniProtKB-SubCell"/>
</dbReference>
<dbReference type="GO" id="GO:0016168">
    <property type="term" value="F:chlorophyll binding"/>
    <property type="evidence" value="ECO:0007669"/>
    <property type="project" value="UniProtKB-KW"/>
</dbReference>
<dbReference type="GO" id="GO:0009767">
    <property type="term" value="P:photosynthetic electron transport chain"/>
    <property type="evidence" value="ECO:0007669"/>
    <property type="project" value="InterPro"/>
</dbReference>
<dbReference type="InterPro" id="IPR000932">
    <property type="entry name" value="PS_antenna-like"/>
</dbReference>
<dbReference type="InterPro" id="IPR036001">
    <property type="entry name" value="PS_II_antenna-like_sf"/>
</dbReference>
<dbReference type="NCBIfam" id="TIGR03041">
    <property type="entry name" value="PS_antenn_a_b"/>
    <property type="match status" value="1"/>
</dbReference>
<dbReference type="Pfam" id="PF00421">
    <property type="entry name" value="PSII"/>
    <property type="match status" value="1"/>
</dbReference>
<dbReference type="SUPFAM" id="SSF161077">
    <property type="entry name" value="Photosystem II antenna protein-like"/>
    <property type="match status" value="1"/>
</dbReference>
<keyword id="KW-0148">Chlorophyll</keyword>
<keyword id="KW-0157">Chromophore</keyword>
<keyword id="KW-0472">Membrane</keyword>
<keyword id="KW-0602">Photosynthesis</keyword>
<keyword id="KW-0603">Photosystem I</keyword>
<keyword id="KW-0604">Photosystem II</keyword>
<keyword id="KW-1185">Reference proteome</keyword>
<keyword id="KW-0793">Thylakoid</keyword>
<keyword id="KW-0812">Transmembrane</keyword>
<keyword id="KW-1133">Transmembrane helix</keyword>
<reference key="1">
    <citation type="journal article" date="1996" name="Proc. Natl. Acad. Sci. U.S.A.">
        <title>Independent evolution of the prochlorophyte and green plant chlorophyll a/b light-harvesting proteins.</title>
        <authorList>
            <person name="La Roche J."/>
            <person name="van der Staay G.W.M."/>
            <person name="Partensky F."/>
            <person name="Ducret A."/>
            <person name="Aebersold R.R."/>
            <person name="Li R."/>
            <person name="Golden S.S."/>
            <person name="Hiller R.G."/>
            <person name="Wrench P.M."/>
            <person name="Larkum A.W.D."/>
            <person name="Green B.R."/>
        </authorList>
    </citation>
    <scope>NUCLEOTIDE SEQUENCE [GENOMIC DNA]</scope>
    <scope>FUNCTION</scope>
    <source>
        <strain>SARG / CCMP1375 / SS120</strain>
    </source>
</reference>
<reference key="2">
    <citation type="journal article" date="2003" name="Proc. Natl. Acad. Sci. U.S.A.">
        <title>Genome sequence of the cyanobacterium Prochlorococcus marinus SS120, a nearly minimal oxyphototrophic genome.</title>
        <authorList>
            <person name="Dufresne A."/>
            <person name="Salanoubat M."/>
            <person name="Partensky F."/>
            <person name="Artiguenave F."/>
            <person name="Axmann I.M."/>
            <person name="Barbe V."/>
            <person name="Duprat S."/>
            <person name="Galperin M.Y."/>
            <person name="Koonin E.V."/>
            <person name="Le Gall F."/>
            <person name="Makarova K.S."/>
            <person name="Ostrowski M."/>
            <person name="Oztas S."/>
            <person name="Robert C."/>
            <person name="Rogozin I.B."/>
            <person name="Scanlan D.J."/>
            <person name="Tandeau de Marsac N."/>
            <person name="Weissenbach J."/>
            <person name="Wincker P."/>
            <person name="Wolf Y.I."/>
            <person name="Hess W.R."/>
        </authorList>
    </citation>
    <scope>NUCLEOTIDE SEQUENCE [LARGE SCALE GENOMIC DNA]</scope>
    <source>
        <strain>SARG / CCMP1375 / SS120</strain>
    </source>
</reference>
<reference key="3">
    <citation type="journal article" date="1997" name="Photosyn. Res.">
        <title>The divinyl-chlorophyll a/b-protein complexes of two strains of the oxyphototrophic marine prokaryote Prochlorococcus -- characterization and response to changes in growth irradiance.</title>
        <authorList>
            <person name="Partensky F."/>
            <person name="La Roche J."/>
            <person name="Wyman K."/>
            <person name="Falkowski P.G."/>
        </authorList>
    </citation>
    <scope>FUNCTION</scope>
    <scope>CHARACTERIZATION OF ENERGETIC COUPLING</scope>
    <scope>CHLOROPHYLL-BINDING</scope>
    <scope>COFACTOR</scope>
    <scope>SUBCELLULAR LOCATION</scope>
    <source>
        <strain>SARG / CCMP1375 / SS120</strain>
    </source>
</reference>
<reference key="4">
    <citation type="journal article" date="2001" name="Plant Mol. Biol.">
        <title>Expression and phylogeny of the multiple antenna genes of the low-light-adapted strain Prochlorococcus marinus SS120 (Oxyphotobacteria).</title>
        <authorList>
            <person name="Garczarek L."/>
            <person name="van der Staay G.W.M."/>
            <person name="Hess W.R."/>
            <person name="Le Gall F."/>
            <person name="Partensky F."/>
        </authorList>
    </citation>
    <scope>INDUCTION</scope>
    <source>
        <strain>SARG / CCMP1375 / SS120</strain>
    </source>
</reference>
<reference key="5">
    <citation type="journal article" date="2003" name="Nature">
        <title>Low-light-adapted Prochlorococcus species possess specific antennae for each photosystem.</title>
        <authorList>
            <person name="Bibby T.S."/>
            <person name="Mary I."/>
            <person name="Nield J."/>
            <person name="Partensky F."/>
            <person name="Barber J."/>
        </authorList>
    </citation>
    <scope>REPRESSION UNDER IRON-STARVATION</scope>
    <source>
        <strain>SARG / CCMP1375 / SS120</strain>
    </source>
</reference>
<organism>
    <name type="scientific">Prochlorococcus marinus (strain SARG / CCMP1375 / SS120)</name>
    <dbReference type="NCBI Taxonomy" id="167539"/>
    <lineage>
        <taxon>Bacteria</taxon>
        <taxon>Bacillati</taxon>
        <taxon>Cyanobacteriota</taxon>
        <taxon>Cyanophyceae</taxon>
        <taxon>Synechococcales</taxon>
        <taxon>Prochlorococcaceae</taxon>
        <taxon>Prochlorococcus</taxon>
    </lineage>
</organism>
<sequence>MQTYGNPDVTYGWWAGNSGVTNRSGKFIAAHAAHTGLIAFWAGAFTLFELARFDPSVPMGHQPLIALPHLATLGIGFDEAGTFVGGTTVTAIAIVHLVLSMVYGAGGLLHSLTFPGDMQDSEVLQARKFKLEWDNPDNQTFILGHHLIFLGVANIQFVEWARIHGIWDAAAGSIRQVEYNLNLSSIWNHQFDFLTINNLEDVMGGHAFLAFFMITGGAFHIATKQVGEYTKFKGSGLLSAEAILSWSLAGIGWMAIVAAFWCATNTTVYPVDFFGEVLDLKFGIAPYWVDTVDLPNGAHTSRAWLTNVHYFLGFFYIQGHLWHALRAMGFDFKRVSSAVSNIGTASVTLND</sequence>
<protein>
    <recommendedName>
        <fullName>Divinyl chlorophyll a/b light-harvesting protein PcbA</fullName>
    </recommendedName>
</protein>